<name>PROB_CAUVN</name>
<keyword id="KW-0028">Amino-acid biosynthesis</keyword>
<keyword id="KW-0067">ATP-binding</keyword>
<keyword id="KW-0963">Cytoplasm</keyword>
<keyword id="KW-0418">Kinase</keyword>
<keyword id="KW-0547">Nucleotide-binding</keyword>
<keyword id="KW-0641">Proline biosynthesis</keyword>
<keyword id="KW-1185">Reference proteome</keyword>
<keyword id="KW-0808">Transferase</keyword>
<evidence type="ECO:0000255" key="1">
    <source>
        <dbReference type="HAMAP-Rule" id="MF_00456"/>
    </source>
</evidence>
<protein>
    <recommendedName>
        <fullName evidence="1">Glutamate 5-kinase</fullName>
        <ecNumber evidence="1">2.7.2.11</ecNumber>
    </recommendedName>
    <alternativeName>
        <fullName evidence="1">Gamma-glutamyl kinase</fullName>
        <shortName evidence="1">GK</shortName>
    </alternativeName>
</protein>
<accession>B8GYI6</accession>
<proteinExistence type="inferred from homology"/>
<comment type="function">
    <text evidence="1">Catalyzes the transfer of a phosphate group to glutamate to form L-glutamate 5-phosphate.</text>
</comment>
<comment type="catalytic activity">
    <reaction evidence="1">
        <text>L-glutamate + ATP = L-glutamyl 5-phosphate + ADP</text>
        <dbReference type="Rhea" id="RHEA:14877"/>
        <dbReference type="ChEBI" id="CHEBI:29985"/>
        <dbReference type="ChEBI" id="CHEBI:30616"/>
        <dbReference type="ChEBI" id="CHEBI:58274"/>
        <dbReference type="ChEBI" id="CHEBI:456216"/>
        <dbReference type="EC" id="2.7.2.11"/>
    </reaction>
</comment>
<comment type="pathway">
    <text evidence="1">Amino-acid biosynthesis; L-proline biosynthesis; L-glutamate 5-semialdehyde from L-glutamate: step 1/2.</text>
</comment>
<comment type="subcellular location">
    <subcellularLocation>
        <location evidence="1">Cytoplasm</location>
    </subcellularLocation>
</comment>
<comment type="similarity">
    <text evidence="1">Belongs to the glutamate 5-kinase family.</text>
</comment>
<reference key="1">
    <citation type="journal article" date="2010" name="J. Bacteriol.">
        <title>The genetic basis of laboratory adaptation in Caulobacter crescentus.</title>
        <authorList>
            <person name="Marks M.E."/>
            <person name="Castro-Rojas C.M."/>
            <person name="Teiling C."/>
            <person name="Du L."/>
            <person name="Kapatral V."/>
            <person name="Walunas T.L."/>
            <person name="Crosson S."/>
        </authorList>
    </citation>
    <scope>NUCLEOTIDE SEQUENCE [LARGE SCALE GENOMIC DNA]</scope>
    <source>
        <strain>NA1000 / CB15N</strain>
    </source>
</reference>
<gene>
    <name evidence="1" type="primary">proB</name>
    <name type="ordered locus">CCNA_00316</name>
</gene>
<organism>
    <name type="scientific">Caulobacter vibrioides (strain NA1000 / CB15N)</name>
    <name type="common">Caulobacter crescentus</name>
    <dbReference type="NCBI Taxonomy" id="565050"/>
    <lineage>
        <taxon>Bacteria</taxon>
        <taxon>Pseudomonadati</taxon>
        <taxon>Pseudomonadota</taxon>
        <taxon>Alphaproteobacteria</taxon>
        <taxon>Caulobacterales</taxon>
        <taxon>Caulobacteraceae</taxon>
        <taxon>Caulobacter</taxon>
    </lineage>
</organism>
<sequence length="377" mass="39041">MTSGSQGAFEAARRIVFKVGSALLVDAETGAANRAWLEAFCADAADLRAAGKQVLVVSSGAVALGRRRLGLTGRKTTLPEKQAAAAAGQSLLMRAWEEAFEPHGIGVAQILLTRDDTEMRRRWLNARATTETLMGLGVVPVVNENDTVVTEEIRYGDNDRLAARVAQMAGADLLVLLSDIDGLYTADPRKNPKAQHIPRVSEITPEIAGMAEGANAAAGVGTGGMATKIAAARIARAAGCATLITLGSRPRPLAAIAAGEKATLIEAGASPAAAYKAWIAGSLAPQGWVTVDAGAASALLAGKSLLPAGVRAVEGPFDKGDAVRVRDENGREVARGLVRYDSADAQRIAGLRSDAIEAELGFTEGPMIHADDLAVAH</sequence>
<dbReference type="EC" id="2.7.2.11" evidence="1"/>
<dbReference type="EMBL" id="CP001340">
    <property type="protein sequence ID" value="ACL93783.1"/>
    <property type="molecule type" value="Genomic_DNA"/>
</dbReference>
<dbReference type="RefSeq" id="WP_010918203.1">
    <property type="nucleotide sequence ID" value="NC_011916.1"/>
</dbReference>
<dbReference type="RefSeq" id="YP_002515691.1">
    <property type="nucleotide sequence ID" value="NC_011916.1"/>
</dbReference>
<dbReference type="SMR" id="B8GYI6"/>
<dbReference type="GeneID" id="7330769"/>
<dbReference type="KEGG" id="ccs:CCNA_00316"/>
<dbReference type="PATRIC" id="fig|565050.3.peg.314"/>
<dbReference type="HOGENOM" id="CLU_025400_2_0_5"/>
<dbReference type="OrthoDB" id="9804434at2"/>
<dbReference type="PhylomeDB" id="B8GYI6"/>
<dbReference type="UniPathway" id="UPA00098">
    <property type="reaction ID" value="UER00359"/>
</dbReference>
<dbReference type="Proteomes" id="UP000001364">
    <property type="component" value="Chromosome"/>
</dbReference>
<dbReference type="GO" id="GO:0005829">
    <property type="term" value="C:cytosol"/>
    <property type="evidence" value="ECO:0007669"/>
    <property type="project" value="TreeGrafter"/>
</dbReference>
<dbReference type="GO" id="GO:0005524">
    <property type="term" value="F:ATP binding"/>
    <property type="evidence" value="ECO:0007669"/>
    <property type="project" value="UniProtKB-KW"/>
</dbReference>
<dbReference type="GO" id="GO:0004349">
    <property type="term" value="F:glutamate 5-kinase activity"/>
    <property type="evidence" value="ECO:0007669"/>
    <property type="project" value="UniProtKB-UniRule"/>
</dbReference>
<dbReference type="GO" id="GO:0003723">
    <property type="term" value="F:RNA binding"/>
    <property type="evidence" value="ECO:0007669"/>
    <property type="project" value="InterPro"/>
</dbReference>
<dbReference type="GO" id="GO:0055129">
    <property type="term" value="P:L-proline biosynthetic process"/>
    <property type="evidence" value="ECO:0007669"/>
    <property type="project" value="UniProtKB-UniRule"/>
</dbReference>
<dbReference type="CDD" id="cd04242">
    <property type="entry name" value="AAK_G5K_ProB"/>
    <property type="match status" value="1"/>
</dbReference>
<dbReference type="CDD" id="cd21157">
    <property type="entry name" value="PUA_G5K"/>
    <property type="match status" value="1"/>
</dbReference>
<dbReference type="FunFam" id="3.40.1160.10:FF:000018">
    <property type="entry name" value="Glutamate 5-kinase"/>
    <property type="match status" value="1"/>
</dbReference>
<dbReference type="Gene3D" id="3.40.1160.10">
    <property type="entry name" value="Acetylglutamate kinase-like"/>
    <property type="match status" value="2"/>
</dbReference>
<dbReference type="Gene3D" id="2.30.130.10">
    <property type="entry name" value="PUA domain"/>
    <property type="match status" value="1"/>
</dbReference>
<dbReference type="HAMAP" id="MF_00456">
    <property type="entry name" value="ProB"/>
    <property type="match status" value="1"/>
</dbReference>
<dbReference type="InterPro" id="IPR036393">
    <property type="entry name" value="AceGlu_kinase-like_sf"/>
</dbReference>
<dbReference type="InterPro" id="IPR001048">
    <property type="entry name" value="Asp/Glu/Uridylate_kinase"/>
</dbReference>
<dbReference type="InterPro" id="IPR041739">
    <property type="entry name" value="G5K_ProB"/>
</dbReference>
<dbReference type="InterPro" id="IPR001057">
    <property type="entry name" value="Glu/AcGlu_kinase"/>
</dbReference>
<dbReference type="InterPro" id="IPR011529">
    <property type="entry name" value="Glu_5kinase"/>
</dbReference>
<dbReference type="InterPro" id="IPR005715">
    <property type="entry name" value="Glu_5kinase/COase_Synthase"/>
</dbReference>
<dbReference type="InterPro" id="IPR019797">
    <property type="entry name" value="Glutamate_5-kinase_CS"/>
</dbReference>
<dbReference type="InterPro" id="IPR002478">
    <property type="entry name" value="PUA"/>
</dbReference>
<dbReference type="InterPro" id="IPR015947">
    <property type="entry name" value="PUA-like_sf"/>
</dbReference>
<dbReference type="InterPro" id="IPR036974">
    <property type="entry name" value="PUA_sf"/>
</dbReference>
<dbReference type="NCBIfam" id="TIGR01027">
    <property type="entry name" value="proB"/>
    <property type="match status" value="1"/>
</dbReference>
<dbReference type="PANTHER" id="PTHR43654">
    <property type="entry name" value="GLUTAMATE 5-KINASE"/>
    <property type="match status" value="1"/>
</dbReference>
<dbReference type="PANTHER" id="PTHR43654:SF1">
    <property type="entry name" value="ISOPENTENYL PHOSPHATE KINASE"/>
    <property type="match status" value="1"/>
</dbReference>
<dbReference type="Pfam" id="PF00696">
    <property type="entry name" value="AA_kinase"/>
    <property type="match status" value="1"/>
</dbReference>
<dbReference type="Pfam" id="PF01472">
    <property type="entry name" value="PUA"/>
    <property type="match status" value="1"/>
</dbReference>
<dbReference type="PIRSF" id="PIRSF000729">
    <property type="entry name" value="GK"/>
    <property type="match status" value="1"/>
</dbReference>
<dbReference type="PRINTS" id="PR00474">
    <property type="entry name" value="GLU5KINASE"/>
</dbReference>
<dbReference type="SMART" id="SM00359">
    <property type="entry name" value="PUA"/>
    <property type="match status" value="1"/>
</dbReference>
<dbReference type="SUPFAM" id="SSF53633">
    <property type="entry name" value="Carbamate kinase-like"/>
    <property type="match status" value="1"/>
</dbReference>
<dbReference type="SUPFAM" id="SSF88697">
    <property type="entry name" value="PUA domain-like"/>
    <property type="match status" value="1"/>
</dbReference>
<dbReference type="PROSITE" id="PS00902">
    <property type="entry name" value="GLUTAMATE_5_KINASE"/>
    <property type="match status" value="1"/>
</dbReference>
<dbReference type="PROSITE" id="PS50890">
    <property type="entry name" value="PUA"/>
    <property type="match status" value="1"/>
</dbReference>
<feature type="chain" id="PRO_1000193690" description="Glutamate 5-kinase">
    <location>
        <begin position="1"/>
        <end position="377"/>
    </location>
</feature>
<feature type="domain" description="PUA" evidence="1">
    <location>
        <begin position="286"/>
        <end position="363"/>
    </location>
</feature>
<feature type="binding site" evidence="1">
    <location>
        <position position="18"/>
    </location>
    <ligand>
        <name>ATP</name>
        <dbReference type="ChEBI" id="CHEBI:30616"/>
    </ligand>
</feature>
<feature type="binding site" evidence="1">
    <location>
        <position position="59"/>
    </location>
    <ligand>
        <name>substrate</name>
    </ligand>
</feature>
<feature type="binding site" evidence="1">
    <location>
        <position position="146"/>
    </location>
    <ligand>
        <name>substrate</name>
    </ligand>
</feature>
<feature type="binding site" evidence="1">
    <location>
        <position position="158"/>
    </location>
    <ligand>
        <name>substrate</name>
    </ligand>
</feature>
<feature type="binding site" evidence="1">
    <location>
        <begin position="178"/>
        <end position="179"/>
    </location>
    <ligand>
        <name>ATP</name>
        <dbReference type="ChEBI" id="CHEBI:30616"/>
    </ligand>
</feature>
<feature type="binding site" evidence="1">
    <location>
        <begin position="222"/>
        <end position="228"/>
    </location>
    <ligand>
        <name>ATP</name>
        <dbReference type="ChEBI" id="CHEBI:30616"/>
    </ligand>
</feature>